<accession>B4SUC9</accession>
<evidence type="ECO:0000255" key="1">
    <source>
        <dbReference type="HAMAP-Rule" id="MF_00190"/>
    </source>
</evidence>
<dbReference type="EC" id="2.7.8.-" evidence="1"/>
<dbReference type="EMBL" id="CP001113">
    <property type="protein sequence ID" value="ACF63679.1"/>
    <property type="molecule type" value="Genomic_DNA"/>
</dbReference>
<dbReference type="RefSeq" id="WP_000206886.1">
    <property type="nucleotide sequence ID" value="NZ_CCMR01000003.1"/>
</dbReference>
<dbReference type="SMR" id="B4SUC9"/>
<dbReference type="KEGG" id="see:SNSL254_A1867"/>
<dbReference type="HOGENOM" id="CLU_038053_1_0_6"/>
<dbReference type="Proteomes" id="UP000008824">
    <property type="component" value="Chromosome"/>
</dbReference>
<dbReference type="GO" id="GO:0005886">
    <property type="term" value="C:plasma membrane"/>
    <property type="evidence" value="ECO:0007669"/>
    <property type="project" value="UniProtKB-SubCell"/>
</dbReference>
<dbReference type="GO" id="GO:0008808">
    <property type="term" value="F:cardiolipin synthase activity"/>
    <property type="evidence" value="ECO:0007669"/>
    <property type="project" value="InterPro"/>
</dbReference>
<dbReference type="GO" id="GO:0032049">
    <property type="term" value="P:cardiolipin biosynthetic process"/>
    <property type="evidence" value="ECO:0007669"/>
    <property type="project" value="InterPro"/>
</dbReference>
<dbReference type="CDD" id="cd09152">
    <property type="entry name" value="PLDc_EcCLS_like_1"/>
    <property type="match status" value="1"/>
</dbReference>
<dbReference type="CDD" id="cd09158">
    <property type="entry name" value="PLDc_EcCLS_like_2"/>
    <property type="match status" value="1"/>
</dbReference>
<dbReference type="FunFam" id="3.30.870.10:FF:000002">
    <property type="entry name" value="Cardiolipin synthase A"/>
    <property type="match status" value="1"/>
</dbReference>
<dbReference type="FunFam" id="3.30.870.10:FF:000003">
    <property type="entry name" value="Cardiolipin synthase A"/>
    <property type="match status" value="1"/>
</dbReference>
<dbReference type="Gene3D" id="3.30.870.10">
    <property type="entry name" value="Endonuclease Chain A"/>
    <property type="match status" value="2"/>
</dbReference>
<dbReference type="HAMAP" id="MF_00190">
    <property type="entry name" value="Cardiolipin_synth_ClsA"/>
    <property type="match status" value="1"/>
</dbReference>
<dbReference type="InterPro" id="IPR022924">
    <property type="entry name" value="Cardiolipin_synthase"/>
</dbReference>
<dbReference type="InterPro" id="IPR030840">
    <property type="entry name" value="CL_synthase_A"/>
</dbReference>
<dbReference type="InterPro" id="IPR027379">
    <property type="entry name" value="CLS_N"/>
</dbReference>
<dbReference type="InterPro" id="IPR025202">
    <property type="entry name" value="PLD-like_dom"/>
</dbReference>
<dbReference type="InterPro" id="IPR001736">
    <property type="entry name" value="PLipase_D/transphosphatidylase"/>
</dbReference>
<dbReference type="NCBIfam" id="TIGR04265">
    <property type="entry name" value="bac_cardiolipin"/>
    <property type="match status" value="1"/>
</dbReference>
<dbReference type="PANTHER" id="PTHR21248">
    <property type="entry name" value="CARDIOLIPIN SYNTHASE"/>
    <property type="match status" value="1"/>
</dbReference>
<dbReference type="PANTHER" id="PTHR21248:SF22">
    <property type="entry name" value="PHOSPHOLIPASE D"/>
    <property type="match status" value="1"/>
</dbReference>
<dbReference type="Pfam" id="PF13091">
    <property type="entry name" value="PLDc_2"/>
    <property type="match status" value="2"/>
</dbReference>
<dbReference type="Pfam" id="PF13396">
    <property type="entry name" value="PLDc_N"/>
    <property type="match status" value="1"/>
</dbReference>
<dbReference type="SMART" id="SM00155">
    <property type="entry name" value="PLDc"/>
    <property type="match status" value="2"/>
</dbReference>
<dbReference type="SUPFAM" id="SSF56024">
    <property type="entry name" value="Phospholipase D/nuclease"/>
    <property type="match status" value="2"/>
</dbReference>
<dbReference type="PROSITE" id="PS50035">
    <property type="entry name" value="PLD"/>
    <property type="match status" value="2"/>
</dbReference>
<proteinExistence type="inferred from homology"/>
<gene>
    <name evidence="1" type="primary">clsA</name>
    <name type="synonym">cls</name>
    <name type="ordered locus">SNSL254_A1867</name>
</gene>
<protein>
    <recommendedName>
        <fullName evidence="1">Cardiolipin synthase A</fullName>
        <shortName evidence="1">CL synthase</shortName>
        <ecNumber evidence="1">2.7.8.-</ecNumber>
    </recommendedName>
</protein>
<keyword id="KW-0997">Cell inner membrane</keyword>
<keyword id="KW-1003">Cell membrane</keyword>
<keyword id="KW-0444">Lipid biosynthesis</keyword>
<keyword id="KW-0443">Lipid metabolism</keyword>
<keyword id="KW-0472">Membrane</keyword>
<keyword id="KW-0594">Phospholipid biosynthesis</keyword>
<keyword id="KW-1208">Phospholipid metabolism</keyword>
<keyword id="KW-0677">Repeat</keyword>
<keyword id="KW-0808">Transferase</keyword>
<keyword id="KW-0812">Transmembrane</keyword>
<keyword id="KW-1133">Transmembrane helix</keyword>
<organism>
    <name type="scientific">Salmonella newport (strain SL254)</name>
    <dbReference type="NCBI Taxonomy" id="423368"/>
    <lineage>
        <taxon>Bacteria</taxon>
        <taxon>Pseudomonadati</taxon>
        <taxon>Pseudomonadota</taxon>
        <taxon>Gammaproteobacteria</taxon>
        <taxon>Enterobacterales</taxon>
        <taxon>Enterobacteriaceae</taxon>
        <taxon>Salmonella</taxon>
    </lineage>
</organism>
<sequence length="486" mass="54734">MTTFYTVVSWLVILGYWVLIAGVTLRILMKRRAVPSAMAWLLIIYILPLVGIIAYLSVGELHLGKRRAERARAMWPSTAKWLNDLKACKHIFAQENSSVASSLFKLCERRQGIAGVKGNQLQLLTDSDDVMQALIRDIQLARHNIEMVFYIWQPGGMADQVAESLMAAARRGIHCRLMLDSAGSVAFFRSPWAAMMRNAGIEVVEALKVNLMRVFLRRMDLRQHRKMVMIDNYIAYTGSMNMVDPRFFKQDAGVGQWVDLMARMEGPVATAMGIVYSCDWEIETGKRILPPPPDVNIMPFEQASGHTIHTIASGPGFPEDLIHQALLTATYAAREYLIMTTPYFVPSDDLLHAICTAAQRGVDVSIILPRKNDSLLVGWASRAFFSELLAAGVKIYQFEGGLLHTKSVLVDGELSLVGTVNLDMRSLWLNFEITLVIDDTGFGADLAAVQDDYISRSRLLDARLWVKRPLWQRITERLFYFFSPLL</sequence>
<name>CLSA_SALNS</name>
<reference key="1">
    <citation type="journal article" date="2011" name="J. Bacteriol.">
        <title>Comparative genomics of 28 Salmonella enterica isolates: evidence for CRISPR-mediated adaptive sublineage evolution.</title>
        <authorList>
            <person name="Fricke W.F."/>
            <person name="Mammel M.K."/>
            <person name="McDermott P.F."/>
            <person name="Tartera C."/>
            <person name="White D.G."/>
            <person name="Leclerc J.E."/>
            <person name="Ravel J."/>
            <person name="Cebula T.A."/>
        </authorList>
    </citation>
    <scope>NUCLEOTIDE SEQUENCE [LARGE SCALE GENOMIC DNA]</scope>
    <source>
        <strain>SL254</strain>
    </source>
</reference>
<feature type="chain" id="PRO_1000098916" description="Cardiolipin synthase A">
    <location>
        <begin position="1"/>
        <end position="486"/>
    </location>
</feature>
<feature type="transmembrane region" description="Helical" evidence="1">
    <location>
        <begin position="3"/>
        <end position="23"/>
    </location>
</feature>
<feature type="transmembrane region" description="Helical" evidence="1">
    <location>
        <begin position="38"/>
        <end position="58"/>
    </location>
</feature>
<feature type="domain" description="PLD phosphodiesterase 1" evidence="1">
    <location>
        <begin position="219"/>
        <end position="246"/>
    </location>
</feature>
<feature type="domain" description="PLD phosphodiesterase 2" evidence="1">
    <location>
        <begin position="399"/>
        <end position="426"/>
    </location>
</feature>
<feature type="active site" evidence="1">
    <location>
        <position position="224"/>
    </location>
</feature>
<feature type="active site" evidence="1">
    <location>
        <position position="226"/>
    </location>
</feature>
<feature type="active site" evidence="1">
    <location>
        <position position="231"/>
    </location>
</feature>
<feature type="active site" evidence="1">
    <location>
        <position position="404"/>
    </location>
</feature>
<feature type="active site" evidence="1">
    <location>
        <position position="406"/>
    </location>
</feature>
<feature type="active site" evidence="1">
    <location>
        <position position="411"/>
    </location>
</feature>
<comment type="function">
    <text evidence="1">Catalyzes the reversible phosphatidyl group transfer from one phosphatidylglycerol molecule to another to form cardiolipin (CL) (diphosphatidylglycerol) and glycerol.</text>
</comment>
<comment type="catalytic activity">
    <reaction evidence="1">
        <text>2 a 1,2-diacyl-sn-glycero-3-phospho-(1'-sn-glycerol) = a cardiolipin + glycerol</text>
        <dbReference type="Rhea" id="RHEA:31451"/>
        <dbReference type="ChEBI" id="CHEBI:17754"/>
        <dbReference type="ChEBI" id="CHEBI:62237"/>
        <dbReference type="ChEBI" id="CHEBI:64716"/>
    </reaction>
</comment>
<comment type="subcellular location">
    <subcellularLocation>
        <location evidence="1">Cell inner membrane</location>
        <topology evidence="1">Multi-pass membrane protein</topology>
    </subcellularLocation>
</comment>
<comment type="similarity">
    <text evidence="1">Belongs to the phospholipase D family. Cardiolipin synthase subfamily. ClsA sub-subfamily.</text>
</comment>